<evidence type="ECO:0000255" key="1">
    <source>
        <dbReference type="HAMAP-Rule" id="MF_01852"/>
    </source>
</evidence>
<protein>
    <recommendedName>
        <fullName evidence="1">Threonylcarbamoyl-AMP synthase</fullName>
        <shortName evidence="1">TC-AMP synthase</shortName>
        <ecNumber evidence="1">2.7.7.87</ecNumber>
    </recommendedName>
    <alternativeName>
        <fullName evidence="1">L-threonylcarbamoyladenylate synthase</fullName>
    </alternativeName>
    <alternativeName>
        <fullName evidence="1">t(6)A37 threonylcarbamoyladenosine biosynthesis protein TsaC</fullName>
    </alternativeName>
    <alternativeName>
        <fullName evidence="1">tRNA threonylcarbamoyladenosine biosynthesis protein TsaC</fullName>
    </alternativeName>
</protein>
<organism>
    <name type="scientific">Shewanella sp. (strain MR-7)</name>
    <dbReference type="NCBI Taxonomy" id="60481"/>
    <lineage>
        <taxon>Bacteria</taxon>
        <taxon>Pseudomonadati</taxon>
        <taxon>Pseudomonadota</taxon>
        <taxon>Gammaproteobacteria</taxon>
        <taxon>Alteromonadales</taxon>
        <taxon>Shewanellaceae</taxon>
        <taxon>Shewanella</taxon>
    </lineage>
</organism>
<feature type="chain" id="PRO_0000352988" description="Threonylcarbamoyl-AMP synthase">
    <location>
        <begin position="1"/>
        <end position="188"/>
    </location>
</feature>
<feature type="domain" description="YrdC-like" evidence="1">
    <location>
        <begin position="3"/>
        <end position="188"/>
    </location>
</feature>
<sequence>MLQLHPSEIKDIVLNGGVIAYPTEAVYGLGCDPDNDTAIQKLLAVKQRPWQKGLILVASEFSQLVDYVDESQLSAEQLEFAFSKWPGPFTFVMPIKPHVSRYLCGEFDSIAVRVSAHEGVRALCQALGKPLVSTSANLAGEDPALSGDEILNAFEGKIDALVLGSLGEQRQPSTIIDARSGKILRNGQ</sequence>
<accession>Q0I0R7</accession>
<proteinExistence type="inferred from homology"/>
<keyword id="KW-0067">ATP-binding</keyword>
<keyword id="KW-0963">Cytoplasm</keyword>
<keyword id="KW-0547">Nucleotide-binding</keyword>
<keyword id="KW-0548">Nucleotidyltransferase</keyword>
<keyword id="KW-0808">Transferase</keyword>
<keyword id="KW-0819">tRNA processing</keyword>
<dbReference type="EC" id="2.7.7.87" evidence="1"/>
<dbReference type="EMBL" id="CP000444">
    <property type="protein sequence ID" value="ABI41038.1"/>
    <property type="molecule type" value="Genomic_DNA"/>
</dbReference>
<dbReference type="SMR" id="Q0I0R7"/>
<dbReference type="KEGG" id="shm:Shewmr7_0032"/>
<dbReference type="HOGENOM" id="CLU_031397_6_0_6"/>
<dbReference type="GO" id="GO:0005737">
    <property type="term" value="C:cytoplasm"/>
    <property type="evidence" value="ECO:0007669"/>
    <property type="project" value="UniProtKB-SubCell"/>
</dbReference>
<dbReference type="GO" id="GO:0005524">
    <property type="term" value="F:ATP binding"/>
    <property type="evidence" value="ECO:0007669"/>
    <property type="project" value="UniProtKB-UniRule"/>
</dbReference>
<dbReference type="GO" id="GO:0003725">
    <property type="term" value="F:double-stranded RNA binding"/>
    <property type="evidence" value="ECO:0007669"/>
    <property type="project" value="InterPro"/>
</dbReference>
<dbReference type="GO" id="GO:0061710">
    <property type="term" value="F:L-threonylcarbamoyladenylate synthase"/>
    <property type="evidence" value="ECO:0007669"/>
    <property type="project" value="UniProtKB-EC"/>
</dbReference>
<dbReference type="GO" id="GO:0000049">
    <property type="term" value="F:tRNA binding"/>
    <property type="evidence" value="ECO:0007669"/>
    <property type="project" value="TreeGrafter"/>
</dbReference>
<dbReference type="GO" id="GO:0006450">
    <property type="term" value="P:regulation of translational fidelity"/>
    <property type="evidence" value="ECO:0007669"/>
    <property type="project" value="TreeGrafter"/>
</dbReference>
<dbReference type="GO" id="GO:0002949">
    <property type="term" value="P:tRNA threonylcarbamoyladenosine modification"/>
    <property type="evidence" value="ECO:0007669"/>
    <property type="project" value="UniProtKB-UniRule"/>
</dbReference>
<dbReference type="FunFam" id="3.90.870.10:FF:000017">
    <property type="entry name" value="Threonylcarbamoyl-AMP synthase"/>
    <property type="match status" value="1"/>
</dbReference>
<dbReference type="Gene3D" id="3.90.870.10">
    <property type="entry name" value="DHBP synthase"/>
    <property type="match status" value="1"/>
</dbReference>
<dbReference type="HAMAP" id="MF_01852">
    <property type="entry name" value="TsaC"/>
    <property type="match status" value="1"/>
</dbReference>
<dbReference type="InterPro" id="IPR017945">
    <property type="entry name" value="DHBP_synth_RibB-like_a/b_dom"/>
</dbReference>
<dbReference type="InterPro" id="IPR006070">
    <property type="entry name" value="Sua5-like_dom"/>
</dbReference>
<dbReference type="InterPro" id="IPR023535">
    <property type="entry name" value="TC-AMP_synthase"/>
</dbReference>
<dbReference type="InterPro" id="IPR050156">
    <property type="entry name" value="TC-AMP_synthase_SUA5"/>
</dbReference>
<dbReference type="NCBIfam" id="TIGR00057">
    <property type="entry name" value="L-threonylcarbamoyladenylate synthase"/>
    <property type="match status" value="1"/>
</dbReference>
<dbReference type="PANTHER" id="PTHR17490">
    <property type="entry name" value="SUA5"/>
    <property type="match status" value="1"/>
</dbReference>
<dbReference type="PANTHER" id="PTHR17490:SF18">
    <property type="entry name" value="THREONYLCARBAMOYL-AMP SYNTHASE"/>
    <property type="match status" value="1"/>
</dbReference>
<dbReference type="Pfam" id="PF01300">
    <property type="entry name" value="Sua5_yciO_yrdC"/>
    <property type="match status" value="1"/>
</dbReference>
<dbReference type="SUPFAM" id="SSF55821">
    <property type="entry name" value="YrdC/RibB"/>
    <property type="match status" value="1"/>
</dbReference>
<dbReference type="PROSITE" id="PS51163">
    <property type="entry name" value="YRDC"/>
    <property type="match status" value="1"/>
</dbReference>
<gene>
    <name evidence="1" type="primary">tsaC</name>
    <name type="synonym">rimN</name>
    <name type="ordered locus">Shewmr7_0032</name>
</gene>
<reference key="1">
    <citation type="submission" date="2006-08" db="EMBL/GenBank/DDBJ databases">
        <title>Complete sequence of chromosome 1 of Shewanella sp. MR-7.</title>
        <authorList>
            <person name="Copeland A."/>
            <person name="Lucas S."/>
            <person name="Lapidus A."/>
            <person name="Barry K."/>
            <person name="Detter J.C."/>
            <person name="Glavina del Rio T."/>
            <person name="Hammon N."/>
            <person name="Israni S."/>
            <person name="Dalin E."/>
            <person name="Tice H."/>
            <person name="Pitluck S."/>
            <person name="Kiss H."/>
            <person name="Brettin T."/>
            <person name="Bruce D."/>
            <person name="Han C."/>
            <person name="Tapia R."/>
            <person name="Gilna P."/>
            <person name="Schmutz J."/>
            <person name="Larimer F."/>
            <person name="Land M."/>
            <person name="Hauser L."/>
            <person name="Kyrpides N."/>
            <person name="Mikhailova N."/>
            <person name="Nealson K."/>
            <person name="Konstantinidis K."/>
            <person name="Klappenbach J."/>
            <person name="Tiedje J."/>
            <person name="Richardson P."/>
        </authorList>
    </citation>
    <scope>NUCLEOTIDE SEQUENCE [LARGE SCALE GENOMIC DNA]</scope>
    <source>
        <strain>MR-7</strain>
    </source>
</reference>
<comment type="function">
    <text evidence="1">Required for the formation of a threonylcarbamoyl group on adenosine at position 37 (t(6)A37) in tRNAs that read codons beginning with adenine. Catalyzes the conversion of L-threonine, HCO(3)(-)/CO(2) and ATP to give threonylcarbamoyl-AMP (TC-AMP) as the acyladenylate intermediate, with the release of diphosphate.</text>
</comment>
<comment type="catalytic activity">
    <reaction evidence="1">
        <text>L-threonine + hydrogencarbonate + ATP = L-threonylcarbamoyladenylate + diphosphate + H2O</text>
        <dbReference type="Rhea" id="RHEA:36407"/>
        <dbReference type="ChEBI" id="CHEBI:15377"/>
        <dbReference type="ChEBI" id="CHEBI:17544"/>
        <dbReference type="ChEBI" id="CHEBI:30616"/>
        <dbReference type="ChEBI" id="CHEBI:33019"/>
        <dbReference type="ChEBI" id="CHEBI:57926"/>
        <dbReference type="ChEBI" id="CHEBI:73682"/>
        <dbReference type="EC" id="2.7.7.87"/>
    </reaction>
</comment>
<comment type="subcellular location">
    <subcellularLocation>
        <location evidence="1">Cytoplasm</location>
    </subcellularLocation>
</comment>
<comment type="similarity">
    <text evidence="1">Belongs to the SUA5 family. TsaC subfamily.</text>
</comment>
<name>TSAC_SHESR</name>